<sequence>MNLPKKVRLVEVGPRDGLQNEKQPIEVADKIRLVDDLSAAGLDYIEVGSFVSPKWVPQMAGSAEVFAGIRQRPGVTYAALAPNLKGFEAALESGVKEVAVFAAASEAFSQRNINCSIKDSLERFVPVLEAARQHQVRVRGYISCVLGCPYDGDVDPRQVAWVARELQQMGCYEVSLGDTIGVGTAGATRRLIEAVASEVPRERLAGHFHDTYGQALANIYASLLEGIAVFDSSVAGLGGCPYAKGATGNVASEDVLYLLNGLEIHTGVDMHALVDAGQRICAVLGKSNGSRAAKALLAKA</sequence>
<organism>
    <name type="scientific">Pseudomonas aeruginosa (strain ATCC 15692 / DSM 22644 / CIP 104116 / JCM 14847 / LMG 12228 / 1C / PRS 101 / PAO1)</name>
    <dbReference type="NCBI Taxonomy" id="208964"/>
    <lineage>
        <taxon>Bacteria</taxon>
        <taxon>Pseudomonadati</taxon>
        <taxon>Pseudomonadota</taxon>
        <taxon>Gammaproteobacteria</taxon>
        <taxon>Pseudomonadales</taxon>
        <taxon>Pseudomonadaceae</taxon>
        <taxon>Pseudomonas</taxon>
    </lineage>
</organism>
<dbReference type="EC" id="4.1.3.26" evidence="5"/>
<dbReference type="EC" id="4.1.3.4" evidence="4 5"/>
<dbReference type="EMBL" id="AE004091">
    <property type="protein sequence ID" value="AAG05399.1"/>
    <property type="molecule type" value="Genomic_DNA"/>
</dbReference>
<dbReference type="PIR" id="H83394">
    <property type="entry name" value="H83394"/>
</dbReference>
<dbReference type="RefSeq" id="NP_250701.1">
    <property type="nucleotide sequence ID" value="NC_002516.2"/>
</dbReference>
<dbReference type="RefSeq" id="WP_003088593.1">
    <property type="nucleotide sequence ID" value="NZ_QZGE01000026.1"/>
</dbReference>
<dbReference type="PDB" id="2FTP">
    <property type="method" value="X-ray"/>
    <property type="resolution" value="2.40 A"/>
    <property type="chains" value="A=1-300"/>
</dbReference>
<dbReference type="PDBsum" id="2FTP"/>
<dbReference type="SMR" id="Q9I2A0"/>
<dbReference type="STRING" id="208964.PA2011"/>
<dbReference type="PaxDb" id="208964-PA2011"/>
<dbReference type="DNASU" id="878857"/>
<dbReference type="GeneID" id="878857"/>
<dbReference type="KEGG" id="pae:PA2011"/>
<dbReference type="PATRIC" id="fig|208964.12.peg.2095"/>
<dbReference type="PseudoCAP" id="PA2011"/>
<dbReference type="HOGENOM" id="CLU_022138_3_2_6"/>
<dbReference type="InParanoid" id="Q9I2A0"/>
<dbReference type="OrthoDB" id="9784013at2"/>
<dbReference type="PhylomeDB" id="Q9I2A0"/>
<dbReference type="BioCyc" id="MetaCyc:MONOMER-16069"/>
<dbReference type="BioCyc" id="PAER208964:G1FZ6-2049-MONOMER"/>
<dbReference type="BRENDA" id="4.1.3.26">
    <property type="organism ID" value="8015"/>
</dbReference>
<dbReference type="UniPathway" id="UPA00896">
    <property type="reaction ID" value="UER00863"/>
</dbReference>
<dbReference type="EvolutionaryTrace" id="Q9I2A0"/>
<dbReference type="Proteomes" id="UP000002438">
    <property type="component" value="Chromosome"/>
</dbReference>
<dbReference type="GO" id="GO:0047445">
    <property type="term" value="F:3-hydroxy-3-isohexenylglutaryl-CoA lyase activity"/>
    <property type="evidence" value="ECO:0007669"/>
    <property type="project" value="UniProtKB-EC"/>
</dbReference>
<dbReference type="GO" id="GO:0004419">
    <property type="term" value="F:hydroxymethylglutaryl-CoA lyase activity"/>
    <property type="evidence" value="ECO:0000315"/>
    <property type="project" value="PseudoCAP"/>
</dbReference>
<dbReference type="GO" id="GO:0046872">
    <property type="term" value="F:metal ion binding"/>
    <property type="evidence" value="ECO:0007669"/>
    <property type="project" value="UniProtKB-KW"/>
</dbReference>
<dbReference type="GO" id="GO:0008300">
    <property type="term" value="P:isoprenoid catabolic process"/>
    <property type="evidence" value="ECO:0000315"/>
    <property type="project" value="PseudoCAP"/>
</dbReference>
<dbReference type="GO" id="GO:0046951">
    <property type="term" value="P:ketone body biosynthetic process"/>
    <property type="evidence" value="ECO:0000318"/>
    <property type="project" value="GO_Central"/>
</dbReference>
<dbReference type="GO" id="GO:0006552">
    <property type="term" value="P:L-leucine catabolic process"/>
    <property type="evidence" value="ECO:0000315"/>
    <property type="project" value="PseudoCAP"/>
</dbReference>
<dbReference type="GO" id="GO:0046247">
    <property type="term" value="P:terpene catabolic process"/>
    <property type="evidence" value="ECO:0000315"/>
    <property type="project" value="PseudoCAP"/>
</dbReference>
<dbReference type="CDD" id="cd07938">
    <property type="entry name" value="DRE_TIM_HMGL"/>
    <property type="match status" value="1"/>
</dbReference>
<dbReference type="FunFam" id="3.20.20.70:FF:000201">
    <property type="entry name" value="Hydroxymethylglutaryl-CoA lyase"/>
    <property type="match status" value="1"/>
</dbReference>
<dbReference type="Gene3D" id="3.20.20.70">
    <property type="entry name" value="Aldolase class I"/>
    <property type="match status" value="1"/>
</dbReference>
<dbReference type="InterPro" id="IPR013785">
    <property type="entry name" value="Aldolase_TIM"/>
</dbReference>
<dbReference type="InterPro" id="IPR000138">
    <property type="entry name" value="HMG_CoA_lyase_AS"/>
</dbReference>
<dbReference type="InterPro" id="IPR043594">
    <property type="entry name" value="HMGL"/>
</dbReference>
<dbReference type="InterPro" id="IPR000891">
    <property type="entry name" value="PYR_CT"/>
</dbReference>
<dbReference type="NCBIfam" id="NF004283">
    <property type="entry name" value="PRK05692.1"/>
    <property type="match status" value="1"/>
</dbReference>
<dbReference type="PANTHER" id="PTHR42738">
    <property type="entry name" value="HYDROXYMETHYLGLUTARYL-COA LYASE"/>
    <property type="match status" value="1"/>
</dbReference>
<dbReference type="PANTHER" id="PTHR42738:SF7">
    <property type="entry name" value="HYDROXYMETHYLGLUTARYL-COA LYASE"/>
    <property type="match status" value="1"/>
</dbReference>
<dbReference type="Pfam" id="PF00682">
    <property type="entry name" value="HMGL-like"/>
    <property type="match status" value="1"/>
</dbReference>
<dbReference type="SUPFAM" id="SSF51569">
    <property type="entry name" value="Aldolase"/>
    <property type="match status" value="1"/>
</dbReference>
<dbReference type="PROSITE" id="PS01062">
    <property type="entry name" value="HMG_COA_LYASE"/>
    <property type="match status" value="1"/>
</dbReference>
<dbReference type="PROSITE" id="PS50991">
    <property type="entry name" value="PYR_CT"/>
    <property type="match status" value="1"/>
</dbReference>
<name>LIUE_PSEAE</name>
<evidence type="ECO:0000250" key="1"/>
<evidence type="ECO:0000255" key="2">
    <source>
        <dbReference type="PROSITE-ProRule" id="PRU01151"/>
    </source>
</evidence>
<evidence type="ECO:0000255" key="3">
    <source>
        <dbReference type="PROSITE-ProRule" id="PRU10115"/>
    </source>
</evidence>
<evidence type="ECO:0000269" key="4">
    <source>
    </source>
</evidence>
<evidence type="ECO:0000269" key="5">
    <source>
    </source>
</evidence>
<evidence type="ECO:0000303" key="6">
    <source>
    </source>
</evidence>
<evidence type="ECO:0000303" key="7">
    <source>
    </source>
</evidence>
<evidence type="ECO:0000305" key="8"/>
<evidence type="ECO:0000305" key="9">
    <source ref="4"/>
</evidence>
<evidence type="ECO:0007829" key="10">
    <source>
        <dbReference type="PDB" id="2FTP"/>
    </source>
</evidence>
<reference key="1">
    <citation type="journal article" date="2000" name="Nature">
        <title>Complete genome sequence of Pseudomonas aeruginosa PAO1, an opportunistic pathogen.</title>
        <authorList>
            <person name="Stover C.K."/>
            <person name="Pham X.-Q.T."/>
            <person name="Erwin A.L."/>
            <person name="Mizoguchi S.D."/>
            <person name="Warrener P."/>
            <person name="Hickey M.J."/>
            <person name="Brinkman F.S.L."/>
            <person name="Hufnagle W.O."/>
            <person name="Kowalik D.J."/>
            <person name="Lagrou M."/>
            <person name="Garber R.L."/>
            <person name="Goltry L."/>
            <person name="Tolentino E."/>
            <person name="Westbrock-Wadman S."/>
            <person name="Yuan Y."/>
            <person name="Brody L.L."/>
            <person name="Coulter S.N."/>
            <person name="Folger K.R."/>
            <person name="Kas A."/>
            <person name="Larbig K."/>
            <person name="Lim R.M."/>
            <person name="Smith K.A."/>
            <person name="Spencer D.H."/>
            <person name="Wong G.K.-S."/>
            <person name="Wu Z."/>
            <person name="Paulsen I.T."/>
            <person name="Reizer J."/>
            <person name="Saier M.H. Jr."/>
            <person name="Hancock R.E.W."/>
            <person name="Lory S."/>
            <person name="Olson M.V."/>
        </authorList>
    </citation>
    <scope>NUCLEOTIDE SEQUENCE [LARGE SCALE GENOMIC DNA]</scope>
    <source>
        <strain>ATCC 15692 / DSM 22644 / CIP 104116 / JCM 14847 / LMG 12228 / 1C / PRS 101 / PAO1</strain>
    </source>
</reference>
<reference key="2">
    <citation type="journal article" date="2009" name="FEMS Microbiol. Lett.">
        <title>The Pseudomonas aeruginosa liuE gene encodes the 3-hydroxy-3-methylglutaryl coenzyme A lyase, involved in leucine and acyclic terpene catabolism.</title>
        <authorList>
            <person name="Chavez-Aviles M."/>
            <person name="Diaz-Perez A.L."/>
            <person name="Reyes-de la Cruz H."/>
            <person name="Campos-Garcia J."/>
        </authorList>
    </citation>
    <scope>FUNCTION</scope>
    <scope>CATALYTIC ACTIVITY</scope>
    <scope>DISRUPTION PHENOTYPE</scope>
    <scope>BIOPHYSICOCHEMICAL PROPERTIES</scope>
    <scope>SUBUNIT</scope>
    <scope>COFACTOR</scope>
    <scope>SUBSTRATE SPECIFICITY</scope>
    <source>
        <strain>ATCC 15692 / DSM 22644 / CIP 104116 / JCM 14847 / LMG 12228 / 1C / PRS 101 / PAO1</strain>
    </source>
</reference>
<reference key="3">
    <citation type="journal article" date="2010" name="Mol. Biol. Rep.">
        <title>The bifunctional role of LiuE from Pseudomonas aeruginosa, displays additionally HIHG-CoA lyase enzymatic activity.</title>
        <authorList>
            <person name="Chavez-Aviles M."/>
            <person name="Diaz-Perez A.L."/>
            <person name="Campos-Garcia J."/>
        </authorList>
    </citation>
    <scope>FUNCTION</scope>
    <scope>CATALYTIC ACTIVITY</scope>
    <source>
        <strain>ATCC 15692 / DSM 22644 / CIP 104116 / JCM 14847 / LMG 12228 / 1C / PRS 101 / PAO1</strain>
    </source>
</reference>
<reference key="4">
    <citation type="submission" date="2006-01" db="PDB data bank">
        <title>Crystal Structure of hydroxymethylglutaryl-CoA lyase from Pseudomonas aeruginosa.</title>
        <authorList>
            <person name="Xiao T."/>
            <person name="Evdokimova E."/>
            <person name="Liu Y."/>
            <person name="Kudritska M."/>
            <person name="Savchenko A."/>
            <person name="Pai E.F."/>
            <person name="Edwards A."/>
        </authorList>
    </citation>
    <scope>X-RAY CRYSTALLOGRAPHY (2.40 ANGSTROMS) IN COMPLEX WITH SODIUM IONS</scope>
</reference>
<keyword id="KW-0002">3D-structure</keyword>
<keyword id="KW-0456">Lyase</keyword>
<keyword id="KW-0460">Magnesium</keyword>
<keyword id="KW-0464">Manganese</keyword>
<keyword id="KW-0479">Metal-binding</keyword>
<keyword id="KW-1185">Reference proteome</keyword>
<accession>Q9I2A0</accession>
<gene>
    <name evidence="6" type="primary">liuE</name>
    <name evidence="6" type="ordered locus">PA2011</name>
</gene>
<proteinExistence type="evidence at protein level"/>
<protein>
    <recommendedName>
        <fullName evidence="6 7">3-hydroxy-3-isohexenylglutaryl-CoA/hydroxy-methylglutaryl-CoA lyase</fullName>
        <shortName evidence="7">HIHG-CoA lyase</shortName>
        <shortName evidence="6">HMG-CoA lyase</shortName>
        <ecNumber evidence="5">4.1.3.26</ecNumber>
        <ecNumber evidence="4 5">4.1.3.4</ecNumber>
    </recommendedName>
    <alternativeName>
        <fullName evidence="6">(S)-3-hydroxy-3-methylglutaryl-CoA acetoacetate-lyase</fullName>
    </alternativeName>
    <alternativeName>
        <fullName evidence="6">3-hydroxy-3-(4-methylpent-3-en-1-yl)glutaryl-CoA acetate-lyase</fullName>
    </alternativeName>
</protein>
<comment type="function">
    <text evidence="4 5">Involved in the L-leucine, isovalerate and acyclic monoterpene catabolism. Catalyzes the cleavage of 3-hydroxy-3-methylglutaryl-CoA (HMG-CoA) to yield acetyl-CoA and acetoacetate. It can also catalyze the cleavage of 3-hydroxy-3-isohexenylglutaryl-CoA (HIHG_CoA) to yield 7-methyl-3-oxooct-6-enoyl-CoA and acetate.</text>
</comment>
<comment type="catalytic activity">
    <reaction evidence="4 5">
        <text>3-hydroxy-3-(4-methylpent-3-en-1-yl)glutaryl-CoA = 7-methyl-3-oxooct-6-enoyl-CoA + acetate</text>
        <dbReference type="Rhea" id="RHEA:23084"/>
        <dbReference type="ChEBI" id="CHEBI:30089"/>
        <dbReference type="ChEBI" id="CHEBI:57341"/>
        <dbReference type="ChEBI" id="CHEBI:71410"/>
        <dbReference type="EC" id="4.1.3.26"/>
    </reaction>
</comment>
<comment type="catalytic activity">
    <reaction evidence="5">
        <text>(3S)-3-hydroxy-3-methylglutaryl-CoA = acetoacetate + acetyl-CoA</text>
        <dbReference type="Rhea" id="RHEA:24404"/>
        <dbReference type="ChEBI" id="CHEBI:13705"/>
        <dbReference type="ChEBI" id="CHEBI:43074"/>
        <dbReference type="ChEBI" id="CHEBI:57288"/>
        <dbReference type="EC" id="4.1.3.4"/>
    </reaction>
</comment>
<comment type="cofactor">
    <cofactor evidence="4">
        <name>Mg(2+)</name>
        <dbReference type="ChEBI" id="CHEBI:18420"/>
    </cofactor>
    <cofactor evidence="4">
        <name>Mn(2+)</name>
        <dbReference type="ChEBI" id="CHEBI:29035"/>
    </cofactor>
    <text evidence="4">Divalent cations such as magnesium or manganese.</text>
</comment>
<comment type="biophysicochemical properties">
    <kinetics>
        <KM evidence="4">100 uM for HMG-CoA (at pH 6.7 and 37 degrees Celsius)</KM>
        <Vmax evidence="4">21.7 umol/min/mg enzyme (at pH 6.7 and 37 degrees Celsius)</Vmax>
    </kinetics>
    <phDependence>
        <text evidence="4">Optimum pH is 7.</text>
    </phDependence>
    <temperatureDependence>
        <text evidence="4">Optimum temperature is 37 degrees Celsius.</text>
    </temperatureDependence>
</comment>
<comment type="pathway">
    <text evidence="8">Metabolic intermediate metabolism; (S)-3-hydroxy-3-methylglutaryl-CoA degradation; acetoacetate from (S)-3-hydroxy-3-methylglutaryl-CoA: step 1/1.</text>
</comment>
<comment type="subunit">
    <text evidence="4">Homodimer.</text>
</comment>
<comment type="disruption phenotype">
    <text evidence="4">Cells lacking this gene are unable to utilize L-leucine, isovalerate or acyclic terpenes as carbon source.</text>
</comment>
<comment type="similarity">
    <text evidence="8">Belongs to the HMG-CoA lyase family.</text>
</comment>
<feature type="chain" id="PRO_0000430769" description="3-hydroxy-3-isohexenylglutaryl-CoA/hydroxy-methylglutaryl-CoA lyase">
    <location>
        <begin position="1"/>
        <end position="300"/>
    </location>
</feature>
<feature type="domain" description="Pyruvate carboxyltransferase" evidence="2">
    <location>
        <begin position="7"/>
        <end position="274"/>
    </location>
</feature>
<feature type="active site" evidence="3">
    <location>
        <position position="240"/>
    </location>
</feature>
<feature type="binding site" evidence="1">
    <location>
        <position position="15"/>
    </location>
    <ligand>
        <name>substrate</name>
    </ligand>
</feature>
<feature type="binding site" evidence="9">
    <location>
        <position position="16"/>
    </location>
    <ligand>
        <name>a divalent metal cation</name>
        <dbReference type="ChEBI" id="CHEBI:60240"/>
    </ligand>
</feature>
<feature type="binding site" evidence="9">
    <location>
        <position position="207"/>
    </location>
    <ligand>
        <name>a divalent metal cation</name>
        <dbReference type="ChEBI" id="CHEBI:60240"/>
    </ligand>
</feature>
<feature type="binding site" evidence="9">
    <location>
        <position position="209"/>
    </location>
    <ligand>
        <name>a divalent metal cation</name>
        <dbReference type="ChEBI" id="CHEBI:60240"/>
    </ligand>
</feature>
<feature type="binding site" evidence="9">
    <location>
        <position position="249"/>
    </location>
    <ligand>
        <name>a divalent metal cation</name>
        <dbReference type="ChEBI" id="CHEBI:60240"/>
    </ligand>
</feature>
<feature type="strand" evidence="10">
    <location>
        <begin position="8"/>
        <end position="11"/>
    </location>
</feature>
<feature type="turn" evidence="10">
    <location>
        <begin position="13"/>
        <end position="15"/>
    </location>
</feature>
<feature type="helix" evidence="10">
    <location>
        <begin position="16"/>
        <end position="19"/>
    </location>
</feature>
<feature type="strand" evidence="10">
    <location>
        <begin position="21"/>
        <end position="23"/>
    </location>
</feature>
<feature type="helix" evidence="10">
    <location>
        <begin position="27"/>
        <end position="39"/>
    </location>
</feature>
<feature type="strand" evidence="10">
    <location>
        <begin position="43"/>
        <end position="49"/>
    </location>
</feature>
<feature type="turn" evidence="10">
    <location>
        <begin position="53"/>
        <end position="55"/>
    </location>
</feature>
<feature type="helix" evidence="10">
    <location>
        <begin position="57"/>
        <end position="59"/>
    </location>
</feature>
<feature type="helix" evidence="10">
    <location>
        <begin position="62"/>
        <end position="68"/>
    </location>
</feature>
<feature type="strand" evidence="10">
    <location>
        <begin position="75"/>
        <end position="80"/>
    </location>
</feature>
<feature type="helix" evidence="10">
    <location>
        <begin position="84"/>
        <end position="92"/>
    </location>
</feature>
<feature type="strand" evidence="10">
    <location>
        <begin position="97"/>
        <end position="104"/>
    </location>
</feature>
<feature type="helix" evidence="10">
    <location>
        <begin position="106"/>
        <end position="113"/>
    </location>
</feature>
<feature type="helix" evidence="10">
    <location>
        <begin position="117"/>
        <end position="133"/>
    </location>
</feature>
<feature type="strand" evidence="10">
    <location>
        <begin position="137"/>
        <end position="143"/>
    </location>
</feature>
<feature type="turn" evidence="10">
    <location>
        <begin position="149"/>
        <end position="151"/>
    </location>
</feature>
<feature type="helix" evidence="10">
    <location>
        <begin position="156"/>
        <end position="168"/>
    </location>
</feature>
<feature type="strand" evidence="10">
    <location>
        <begin position="172"/>
        <end position="181"/>
    </location>
</feature>
<feature type="helix" evidence="10">
    <location>
        <begin position="185"/>
        <end position="195"/>
    </location>
</feature>
<feature type="turn" evidence="10">
    <location>
        <begin position="196"/>
        <end position="198"/>
    </location>
</feature>
<feature type="helix" evidence="10">
    <location>
        <begin position="201"/>
        <end position="203"/>
    </location>
</feature>
<feature type="strand" evidence="10">
    <location>
        <begin position="204"/>
        <end position="209"/>
    </location>
</feature>
<feature type="helix" evidence="10">
    <location>
        <begin position="215"/>
        <end position="224"/>
    </location>
</feature>
<feature type="strand" evidence="10">
    <location>
        <begin position="229"/>
        <end position="233"/>
    </location>
</feature>
<feature type="helix" evidence="10">
    <location>
        <begin position="234"/>
        <end position="236"/>
    </location>
</feature>
<feature type="helix" evidence="10">
    <location>
        <begin position="241"/>
        <end position="243"/>
    </location>
</feature>
<feature type="helix" evidence="10">
    <location>
        <begin position="252"/>
        <end position="261"/>
    </location>
</feature>
<feature type="helix" evidence="10">
    <location>
        <begin position="270"/>
        <end position="284"/>
    </location>
</feature>
<feature type="helix" evidence="10">
    <location>
        <begin position="291"/>
        <end position="299"/>
    </location>
</feature>